<evidence type="ECO:0000255" key="1">
    <source>
        <dbReference type="HAMAP-Rule" id="MF_00374"/>
    </source>
</evidence>
<evidence type="ECO:0000305" key="2"/>
<proteinExistence type="inferred from homology"/>
<reference key="1">
    <citation type="journal article" date="2008" name="BMC Genomics">
        <title>The missing link: Bordetella petrii is endowed with both the metabolic versatility of environmental bacteria and virulence traits of pathogenic Bordetellae.</title>
        <authorList>
            <person name="Gross R."/>
            <person name="Guzman C.A."/>
            <person name="Sebaihia M."/>
            <person name="Martin dos Santos V.A.P."/>
            <person name="Pieper D.H."/>
            <person name="Koebnik R."/>
            <person name="Lechner M."/>
            <person name="Bartels D."/>
            <person name="Buhrmester J."/>
            <person name="Choudhuri J.V."/>
            <person name="Ebensen T."/>
            <person name="Gaigalat L."/>
            <person name="Herrmann S."/>
            <person name="Khachane A.N."/>
            <person name="Larisch C."/>
            <person name="Link S."/>
            <person name="Linke B."/>
            <person name="Meyer F."/>
            <person name="Mormann S."/>
            <person name="Nakunst D."/>
            <person name="Rueckert C."/>
            <person name="Schneiker-Bekel S."/>
            <person name="Schulze K."/>
            <person name="Voerholter F.-J."/>
            <person name="Yevsa T."/>
            <person name="Engle J.T."/>
            <person name="Goldman W.E."/>
            <person name="Puehler A."/>
            <person name="Goebel U.B."/>
            <person name="Goesmann A."/>
            <person name="Bloecker H."/>
            <person name="Kaiser O."/>
            <person name="Martinez-Arias R."/>
        </authorList>
    </citation>
    <scope>NUCLEOTIDE SEQUENCE [LARGE SCALE GENOMIC DNA]</scope>
    <source>
        <strain>ATCC BAA-461 / DSM 12804 / CCUG 43448</strain>
    </source>
</reference>
<keyword id="KW-0687">Ribonucleoprotein</keyword>
<keyword id="KW-0689">Ribosomal protein</keyword>
<sequence length="63" mass="7098">MKASELRSKDAAELGQELESLLKAQFGLRMQKATQQLANTSQLRNVRRDIARVRTLLTEKAGK</sequence>
<name>RL29_BORPD</name>
<dbReference type="EMBL" id="AM902716">
    <property type="protein sequence ID" value="CAP45296.1"/>
    <property type="molecule type" value="Genomic_DNA"/>
</dbReference>
<dbReference type="SMR" id="A9IIY8"/>
<dbReference type="STRING" id="94624.Bpet4944"/>
<dbReference type="KEGG" id="bpt:Bpet4944"/>
<dbReference type="eggNOG" id="COG0255">
    <property type="taxonomic scope" value="Bacteria"/>
</dbReference>
<dbReference type="Proteomes" id="UP000001225">
    <property type="component" value="Chromosome"/>
</dbReference>
<dbReference type="GO" id="GO:0022625">
    <property type="term" value="C:cytosolic large ribosomal subunit"/>
    <property type="evidence" value="ECO:0007669"/>
    <property type="project" value="TreeGrafter"/>
</dbReference>
<dbReference type="GO" id="GO:0003735">
    <property type="term" value="F:structural constituent of ribosome"/>
    <property type="evidence" value="ECO:0007669"/>
    <property type="project" value="InterPro"/>
</dbReference>
<dbReference type="GO" id="GO:0006412">
    <property type="term" value="P:translation"/>
    <property type="evidence" value="ECO:0007669"/>
    <property type="project" value="UniProtKB-UniRule"/>
</dbReference>
<dbReference type="CDD" id="cd00427">
    <property type="entry name" value="Ribosomal_L29_HIP"/>
    <property type="match status" value="1"/>
</dbReference>
<dbReference type="FunFam" id="1.10.287.310:FF:000001">
    <property type="entry name" value="50S ribosomal protein L29"/>
    <property type="match status" value="1"/>
</dbReference>
<dbReference type="Gene3D" id="1.10.287.310">
    <property type="match status" value="1"/>
</dbReference>
<dbReference type="HAMAP" id="MF_00374">
    <property type="entry name" value="Ribosomal_uL29"/>
    <property type="match status" value="1"/>
</dbReference>
<dbReference type="InterPro" id="IPR050063">
    <property type="entry name" value="Ribosomal_protein_uL29"/>
</dbReference>
<dbReference type="InterPro" id="IPR001854">
    <property type="entry name" value="Ribosomal_uL29"/>
</dbReference>
<dbReference type="InterPro" id="IPR018254">
    <property type="entry name" value="Ribosomal_uL29_CS"/>
</dbReference>
<dbReference type="InterPro" id="IPR036049">
    <property type="entry name" value="Ribosomal_uL29_sf"/>
</dbReference>
<dbReference type="NCBIfam" id="TIGR00012">
    <property type="entry name" value="L29"/>
    <property type="match status" value="1"/>
</dbReference>
<dbReference type="PANTHER" id="PTHR10916">
    <property type="entry name" value="60S RIBOSOMAL PROTEIN L35/50S RIBOSOMAL PROTEIN L29"/>
    <property type="match status" value="1"/>
</dbReference>
<dbReference type="PANTHER" id="PTHR10916:SF0">
    <property type="entry name" value="LARGE RIBOSOMAL SUBUNIT PROTEIN UL29C"/>
    <property type="match status" value="1"/>
</dbReference>
<dbReference type="Pfam" id="PF00831">
    <property type="entry name" value="Ribosomal_L29"/>
    <property type="match status" value="1"/>
</dbReference>
<dbReference type="SUPFAM" id="SSF46561">
    <property type="entry name" value="Ribosomal protein L29 (L29p)"/>
    <property type="match status" value="1"/>
</dbReference>
<dbReference type="PROSITE" id="PS00579">
    <property type="entry name" value="RIBOSOMAL_L29"/>
    <property type="match status" value="1"/>
</dbReference>
<comment type="similarity">
    <text evidence="1">Belongs to the universal ribosomal protein uL29 family.</text>
</comment>
<feature type="chain" id="PRO_1000121736" description="Large ribosomal subunit protein uL29">
    <location>
        <begin position="1"/>
        <end position="63"/>
    </location>
</feature>
<organism>
    <name type="scientific">Bordetella petrii (strain ATCC BAA-461 / DSM 12804 / CCUG 43448)</name>
    <dbReference type="NCBI Taxonomy" id="340100"/>
    <lineage>
        <taxon>Bacteria</taxon>
        <taxon>Pseudomonadati</taxon>
        <taxon>Pseudomonadota</taxon>
        <taxon>Betaproteobacteria</taxon>
        <taxon>Burkholderiales</taxon>
        <taxon>Alcaligenaceae</taxon>
        <taxon>Bordetella</taxon>
    </lineage>
</organism>
<accession>A9IIY8</accession>
<gene>
    <name evidence="1" type="primary">rpmC</name>
    <name type="ordered locus">Bpet4944</name>
</gene>
<protein>
    <recommendedName>
        <fullName evidence="1">Large ribosomal subunit protein uL29</fullName>
    </recommendedName>
    <alternativeName>
        <fullName evidence="2">50S ribosomal protein L29</fullName>
    </alternativeName>
</protein>